<gene>
    <name type="primary">MED33A</name>
    <name type="synonym">MED24A</name>
    <name type="synonym">MED5_2</name>
    <name type="synonym">MED5A</name>
    <name type="synonym">RFR1</name>
    <name type="ordered locus">At3g23590</name>
    <name type="ORF">MDB19.7</name>
</gene>
<name>MD33A_ARATH</name>
<evidence type="ECO:0000256" key="1">
    <source>
        <dbReference type="SAM" id="MobiDB-lite"/>
    </source>
</evidence>
<evidence type="ECO:0000269" key="2">
    <source>
    </source>
</evidence>
<evidence type="ECO:0000269" key="3">
    <source>
    </source>
</evidence>
<evidence type="ECO:0000305" key="4"/>
<comment type="function">
    <text evidence="3">Component of the Mediator complex, a coactivator involved in the regulated transcription of nearly all RNA polymerase II-dependent genes. Mediator functions as a bridge to convey information from gene-specific regulatory proteins to the basal RNA polymerase II transcription machinery. The Mediator complex, having a compact conformation in its free form, is recruited to promoters by direct interactions with regulatory proteins and serves for the assembly of a functional preinitiation complex with RNA polymerase II and the general transcription factors. Involved in the repression of phenylpropanoid biosynthesis. May compete with MED33B for common binding partners or for occupancy in Mediator.</text>
</comment>
<comment type="subunit">
    <text evidence="2">Component of the Mediator complex.</text>
</comment>
<comment type="subcellular location">
    <subcellularLocation>
        <location evidence="4">Nucleus</location>
    </subcellularLocation>
</comment>
<comment type="disruption phenotype">
    <text evidence="3">No visible phenotype, but higher levels of sinapate esters in leaves.</text>
</comment>
<comment type="similarity">
    <text evidence="4">Belongs to the Mediator complex subunit 33 family.</text>
</comment>
<reference key="1">
    <citation type="journal article" date="2000" name="DNA Res.">
        <title>Structural analysis of Arabidopsis thaliana chromosome 3. I. Sequence features of the regions of 4,504,864 bp covered by sixty P1 and TAC clones.</title>
        <authorList>
            <person name="Sato S."/>
            <person name="Nakamura Y."/>
            <person name="Kaneko T."/>
            <person name="Katoh T."/>
            <person name="Asamizu E."/>
            <person name="Tabata S."/>
        </authorList>
    </citation>
    <scope>NUCLEOTIDE SEQUENCE [LARGE SCALE GENOMIC DNA]</scope>
    <source>
        <strain>cv. Columbia</strain>
    </source>
</reference>
<reference key="2">
    <citation type="journal article" date="2017" name="Plant J.">
        <title>Araport11: a complete reannotation of the Arabidopsis thaliana reference genome.</title>
        <authorList>
            <person name="Cheng C.Y."/>
            <person name="Krishnakumar V."/>
            <person name="Chan A.P."/>
            <person name="Thibaud-Nissen F."/>
            <person name="Schobel S."/>
            <person name="Town C.D."/>
        </authorList>
    </citation>
    <scope>GENOME REANNOTATION</scope>
    <source>
        <strain>cv. Columbia</strain>
    </source>
</reference>
<reference key="3">
    <citation type="submission" date="2002-11" db="EMBL/GenBank/DDBJ databases">
        <title>Arabidopsis thaliana full-length cDNA.</title>
        <authorList>
            <person name="Seki M."/>
            <person name="Iida K."/>
            <person name="Satou M."/>
            <person name="Sakurai T."/>
            <person name="Akiyama K."/>
            <person name="Ishida J."/>
            <person name="Nakajima M."/>
            <person name="Enju A."/>
            <person name="Kamiya A."/>
            <person name="Narusaka M."/>
            <person name="Carninci P."/>
            <person name="Kawai J."/>
            <person name="Hayashizaki Y."/>
            <person name="Shinozaki K."/>
        </authorList>
    </citation>
    <scope>NUCLEOTIDE SEQUENCE [LARGE SCALE MRNA]</scope>
</reference>
<reference key="4">
    <citation type="submission" date="2006-07" db="EMBL/GenBank/DDBJ databases">
        <title>Large-scale analysis of RIKEN Arabidopsis full-length (RAFL) cDNAs.</title>
        <authorList>
            <person name="Totoki Y."/>
            <person name="Seki M."/>
            <person name="Ishida J."/>
            <person name="Nakajima M."/>
            <person name="Enju A."/>
            <person name="Kamiya A."/>
            <person name="Narusaka M."/>
            <person name="Shin-i T."/>
            <person name="Nakagawa M."/>
            <person name="Sakamoto N."/>
            <person name="Oishi K."/>
            <person name="Kohara Y."/>
            <person name="Kobayashi M."/>
            <person name="Toyoda A."/>
            <person name="Sakaki Y."/>
            <person name="Sakurai T."/>
            <person name="Iida K."/>
            <person name="Akiyama K."/>
            <person name="Satou M."/>
            <person name="Toyoda T."/>
            <person name="Konagaya A."/>
            <person name="Carninci P."/>
            <person name="Kawai J."/>
            <person name="Hayashizaki Y."/>
            <person name="Shinozaki K."/>
        </authorList>
    </citation>
    <scope>NUCLEOTIDE SEQUENCE [LARGE SCALE MRNA] OF 940-1309</scope>
    <source>
        <strain>cv. Columbia</strain>
    </source>
</reference>
<reference key="5">
    <citation type="journal article" date="2007" name="Mol. Cell">
        <title>Purification of a plant mediator from Arabidopsis thaliana identifies PFT1 as the Med25 subunit.</title>
        <authorList>
            <person name="Baeckstroem S."/>
            <person name="Elfving N."/>
            <person name="Nilsson R."/>
            <person name="Wingsle G."/>
            <person name="Bjoerklund S."/>
        </authorList>
    </citation>
    <scope>IDENTIFICATION BY MASS SPECTROMETRY</scope>
    <scope>IDENTIFICATION IN THE MEDIATOR COMPLEX</scope>
    <scope>NOMENCLATURE</scope>
</reference>
<reference key="6">
    <citation type="journal article" date="2008" name="Genetics">
        <title>Semidominant mutations in reduced epidermal fluorescence 4 reduce phenylpropanoid content in Arabidopsis.</title>
        <authorList>
            <person name="Stout J."/>
            <person name="Romero-Severson E."/>
            <person name="Ruegger M.O."/>
            <person name="Chapple C."/>
        </authorList>
    </citation>
    <scope>IDENTIFICATION</scope>
</reference>
<reference key="7">
    <citation type="journal article" date="2011" name="Plant Physiol.">
        <title>The Mediator complex in plants: structure, phylogeny, and expression profiling of representative genes in a dicot (Arabidopsis) and a monocot (rice) during reproduction and abiotic stress.</title>
        <authorList>
            <person name="Mathur S."/>
            <person name="Vyas S."/>
            <person name="Kapoor S."/>
            <person name="Tyagi A.K."/>
        </authorList>
    </citation>
    <scope>IDENTIFICATION</scope>
    <scope>NOMENCLATURE</scope>
</reference>
<reference key="8">
    <citation type="journal article" date="2012" name="J. Biol. Chem.">
        <title>REF4 and RFR1, subunits of the transcriptional coregulatory complex mediator, are required for phenylpropanoid homeostasis in Arabidopsis.</title>
        <authorList>
            <person name="Bonawitz N.D."/>
            <person name="Soltau W.L."/>
            <person name="Blatchley M.R."/>
            <person name="Powers B.L."/>
            <person name="Hurlock A.K."/>
            <person name="Seals L.A."/>
            <person name="Weng J.K."/>
            <person name="Stout J."/>
            <person name="Chapple C."/>
        </authorList>
    </citation>
    <scope>FUNCTION</scope>
    <scope>DISRUPTION PHENOTYPE</scope>
</reference>
<proteinExistence type="evidence at protein level"/>
<keyword id="KW-0539">Nucleus</keyword>
<keyword id="KW-0587">Phenylpropanoid metabolism</keyword>
<keyword id="KW-1185">Reference proteome</keyword>
<keyword id="KW-0678">Repressor</keyword>
<keyword id="KW-0804">Transcription</keyword>
<keyword id="KW-0805">Transcription regulation</keyword>
<sequence>MVVPGRRTVWDCVIELTKMAQENCVDPRLWASQLSSNLKFFAVELPSTELAEVIVSYICWDNNVPIVWKFLERAMALKLVSPLVVLALLADRVVPTRSTQQAAYRIYLELLKRNMFTIKDHISGPHYQKVMISVSNILRLSELFDLDTSKPGVLLVEFVFKMVSQLLDAALSDEGLLELSQDSSSQWLVKSQDMEIDAPERYNEKTGSLEKLQSLNTIMAIELIAEFLRNTVIARLLYLVSSNRASKWHEFVQKVQLLGENSSALKHSKVLNSGDLLQLISNRRFGYSYDSKVTSARKSNAIVDFGSLSSYAGLCHGASLSSLWLPLDLVFEDAMDGYQVNPTSAIEIITGLAKTLKEINGSTWHDTFLGLWIAALRLVQRERDPIEGPIPRLDTRLCMSLCIVPLVVANLIEEGKYESVMEKLRDDLVTSLQVLGDFPGLLAPPKCVVSAANKAATKAILFLSGGNVGKSCFDVINMKDMPVNCSGNMRHLIVEACIARNILDMSAYSWPGYVNGRINQIPQSLPNEVPCWSSFVKGAPLNAAMVNTLVSVPASSLAELEKLFEVAVKGSDDEKISAATVLCGASLTRGWNIQEHTVEYLTRLLSPPVPADYSRAENHLIGYACMLNVVIVGIGSVDSIQIFSLHGMVPQLACSLMPICEEFGSYTPSVSWTLPSGEAISAYSVFSNAFTLLLKLWRFNHPPIEHGVGDVPTVGSQLTPEHLLSVRNSYLVSSEILDRDRNRKRLSEVARAASCQPVFVDSFPKLKVWYRQHQRCIAATLSGLTHGSPVHQTVEALLNMTFGKVRGSQTLNPVNSGTSSSSGAASEDSNIRPEFPAWDILKAVPYVVDAALTACTHGRLSPRQLATGLKDLADFLPASLATIVSYFSAEVSRGVWKPVFMNGVDWPSPATNLSTVEEYITKILATTGVDIPSLAPGGSSPATLPLPLAAFVSLTITYKIDKASERFLNLAGPALECLAAGCPWPCMPIVASLWTQKAKRWFDFLVFSASRTVFLHNQDAVIQLLRNCFSATLGLNAAPMSNDGGVGALLGHGFGSHFYGGISPVAPGILYLRMYRALRDTVSVSEEILSLLIHSVEDIAQNRLSKEKLEKLKTVKNGSRYGQSSLATAMTQVKLAASLSASLVWLTGGLGVVHVLIKETIPSWFLSTDKSDREQGPSDLVAELRGHALAYFVVLCGALTWGVDSRSSASKRRRQAILGSHLEFIASALDGKISVGCETATWRTYISGLVSLMVSCLPLWVTEIDTEVLKSLSNGLRKWGKDELAIVLLSLGGLKTMDYAADFIIHLRS</sequence>
<feature type="chain" id="PRO_0000418344" description="Mediator of RNA polymerase II transcription subunit 33A">
    <location>
        <begin position="1"/>
        <end position="1309"/>
    </location>
</feature>
<feature type="region of interest" description="Disordered" evidence="1">
    <location>
        <begin position="809"/>
        <end position="829"/>
    </location>
</feature>
<feature type="compositionally biased region" description="Low complexity" evidence="1">
    <location>
        <begin position="816"/>
        <end position="826"/>
    </location>
</feature>
<feature type="sequence conflict" description="In Ref. 3; BAC41797." evidence="4" ref="3">
    <original>Y</original>
    <variation>H</variation>
    <location>
        <position position="127"/>
    </location>
</feature>
<feature type="sequence conflict" description="In Ref. 4; BAF01832." evidence="4" ref="4">
    <original>HVLIK</original>
    <variation>RVLIR</variation>
    <location>
        <begin position="1154"/>
        <end position="1158"/>
    </location>
</feature>
<organism>
    <name type="scientific">Arabidopsis thaliana</name>
    <name type="common">Mouse-ear cress</name>
    <dbReference type="NCBI Taxonomy" id="3702"/>
    <lineage>
        <taxon>Eukaryota</taxon>
        <taxon>Viridiplantae</taxon>
        <taxon>Streptophyta</taxon>
        <taxon>Embryophyta</taxon>
        <taxon>Tracheophyta</taxon>
        <taxon>Spermatophyta</taxon>
        <taxon>Magnoliopsida</taxon>
        <taxon>eudicotyledons</taxon>
        <taxon>Gunneridae</taxon>
        <taxon>Pentapetalae</taxon>
        <taxon>rosids</taxon>
        <taxon>malvids</taxon>
        <taxon>Brassicales</taxon>
        <taxon>Brassicaceae</taxon>
        <taxon>Camelineae</taxon>
        <taxon>Arabidopsis</taxon>
    </lineage>
</organism>
<accession>Q9LUG9</accession>
<accession>Q0WM25</accession>
<accession>Q8GZA2</accession>
<dbReference type="EMBL" id="AB023036">
    <property type="protein sequence ID" value="BAB02777.1"/>
    <property type="molecule type" value="Genomic_DNA"/>
</dbReference>
<dbReference type="EMBL" id="CP002686">
    <property type="protein sequence ID" value="AEE76780.1"/>
    <property type="molecule type" value="Genomic_DNA"/>
</dbReference>
<dbReference type="EMBL" id="AK117119">
    <property type="protein sequence ID" value="BAC41797.1"/>
    <property type="molecule type" value="mRNA"/>
</dbReference>
<dbReference type="EMBL" id="AK230008">
    <property type="protein sequence ID" value="BAF01832.1"/>
    <property type="molecule type" value="mRNA"/>
</dbReference>
<dbReference type="RefSeq" id="NP_189001.1">
    <property type="nucleotide sequence ID" value="NM_113262.4"/>
</dbReference>
<dbReference type="FunCoup" id="Q9LUG9">
    <property type="interactions" value="783"/>
</dbReference>
<dbReference type="IntAct" id="Q9LUG9">
    <property type="interactions" value="1"/>
</dbReference>
<dbReference type="STRING" id="3702.Q9LUG9"/>
<dbReference type="iPTMnet" id="Q9LUG9"/>
<dbReference type="PaxDb" id="3702-AT3G23590.1"/>
<dbReference type="ProteomicsDB" id="238246"/>
<dbReference type="EnsemblPlants" id="AT3G23590.1">
    <property type="protein sequence ID" value="AT3G23590.1"/>
    <property type="gene ID" value="AT3G23590"/>
</dbReference>
<dbReference type="GeneID" id="821938"/>
<dbReference type="Gramene" id="AT3G23590.1">
    <property type="protein sequence ID" value="AT3G23590.1"/>
    <property type="gene ID" value="AT3G23590"/>
</dbReference>
<dbReference type="KEGG" id="ath:AT3G23590"/>
<dbReference type="Araport" id="AT3G23590"/>
<dbReference type="TAIR" id="AT3G23590">
    <property type="gene designation" value="RFR1"/>
</dbReference>
<dbReference type="eggNOG" id="ENOG502QRBB">
    <property type="taxonomic scope" value="Eukaryota"/>
</dbReference>
<dbReference type="HOGENOM" id="CLU_003077_0_0_1"/>
<dbReference type="InParanoid" id="Q9LUG9"/>
<dbReference type="OMA" id="MPICEEF"/>
<dbReference type="OrthoDB" id="625764at2759"/>
<dbReference type="PhylomeDB" id="Q9LUG9"/>
<dbReference type="PRO" id="PR:Q9LUG9"/>
<dbReference type="Proteomes" id="UP000006548">
    <property type="component" value="Chromosome 3"/>
</dbReference>
<dbReference type="ExpressionAtlas" id="Q9LUG9">
    <property type="expression patterns" value="baseline and differential"/>
</dbReference>
<dbReference type="GO" id="GO:0016592">
    <property type="term" value="C:mediator complex"/>
    <property type="evidence" value="ECO:0000314"/>
    <property type="project" value="UniProtKB"/>
</dbReference>
<dbReference type="GO" id="GO:0009698">
    <property type="term" value="P:phenylpropanoid metabolic process"/>
    <property type="evidence" value="ECO:0007669"/>
    <property type="project" value="UniProtKB-KW"/>
</dbReference>
<dbReference type="GO" id="GO:2000762">
    <property type="term" value="P:regulation of phenylpropanoid metabolic process"/>
    <property type="evidence" value="ECO:0000315"/>
    <property type="project" value="TAIR"/>
</dbReference>
<dbReference type="InterPro" id="IPR039638">
    <property type="entry name" value="MED33A/B"/>
</dbReference>
<dbReference type="PANTHER" id="PTHR33739:SF5">
    <property type="entry name" value="MEDIATOR OF RNA POLYMERASE II TRANSCRIPTION SUBUNIT 33A"/>
    <property type="match status" value="1"/>
</dbReference>
<dbReference type="PANTHER" id="PTHR33739">
    <property type="entry name" value="OS07G0681500 PROTEIN"/>
    <property type="match status" value="1"/>
</dbReference>
<protein>
    <recommendedName>
        <fullName>Mediator of RNA polymerase II transcription subunit 33A</fullName>
    </recommendedName>
    <alternativeName>
        <fullName>REF4-related 1 protein</fullName>
    </alternativeName>
    <alternativeName>
        <fullName>REF4-resembling 1 protein</fullName>
    </alternativeName>
</protein>